<gene>
    <name evidence="5" type="primary">GT7</name>
    <name evidence="6" type="ORF">OsI_08746</name>
</gene>
<comment type="function">
    <text evidence="1">Probable glycosyltransferase that may be involved in the biosynthesis of xyloglucan.</text>
</comment>
<comment type="subcellular location">
    <subcellularLocation>
        <location evidence="5">Golgi apparatus membrane</location>
        <topology evidence="5">Single-pass type II membrane protein</topology>
    </subcellularLocation>
</comment>
<comment type="similarity">
    <text evidence="5">Belongs to the glycosyltransferase 34 family.</text>
</comment>
<comment type="sequence caution" evidence="5">
    <conflict type="erroneous initiation">
        <sequence resource="EMBL-CDS" id="EAY87343"/>
    </conflict>
    <text>Truncated N-terminus.</text>
</comment>
<keyword id="KW-0325">Glycoprotein</keyword>
<keyword id="KW-0328">Glycosyltransferase</keyword>
<keyword id="KW-0333">Golgi apparatus</keyword>
<keyword id="KW-0472">Membrane</keyword>
<keyword id="KW-1185">Reference proteome</keyword>
<keyword id="KW-0735">Signal-anchor</keyword>
<keyword id="KW-0808">Transferase</keyword>
<keyword id="KW-0812">Transmembrane</keyword>
<keyword id="KW-1133">Transmembrane helix</keyword>
<organism>
    <name type="scientific">Oryza sativa subsp. indica</name>
    <name type="common">Rice</name>
    <dbReference type="NCBI Taxonomy" id="39946"/>
    <lineage>
        <taxon>Eukaryota</taxon>
        <taxon>Viridiplantae</taxon>
        <taxon>Streptophyta</taxon>
        <taxon>Embryophyta</taxon>
        <taxon>Tracheophyta</taxon>
        <taxon>Spermatophyta</taxon>
        <taxon>Magnoliopsida</taxon>
        <taxon>Liliopsida</taxon>
        <taxon>Poales</taxon>
        <taxon>Poaceae</taxon>
        <taxon>BOP clade</taxon>
        <taxon>Oryzoideae</taxon>
        <taxon>Oryzeae</taxon>
        <taxon>Oryzinae</taxon>
        <taxon>Oryza</taxon>
        <taxon>Oryza sativa</taxon>
    </lineage>
</organism>
<name>GT7_ORYSI</name>
<reference key="1">
    <citation type="journal article" date="2005" name="PLoS Biol.">
        <title>The genomes of Oryza sativa: a history of duplications.</title>
        <authorList>
            <person name="Yu J."/>
            <person name="Wang J."/>
            <person name="Lin W."/>
            <person name="Li S."/>
            <person name="Li H."/>
            <person name="Zhou J."/>
            <person name="Ni P."/>
            <person name="Dong W."/>
            <person name="Hu S."/>
            <person name="Zeng C."/>
            <person name="Zhang J."/>
            <person name="Zhang Y."/>
            <person name="Li R."/>
            <person name="Xu Z."/>
            <person name="Li S."/>
            <person name="Li X."/>
            <person name="Zheng H."/>
            <person name="Cong L."/>
            <person name="Lin L."/>
            <person name="Yin J."/>
            <person name="Geng J."/>
            <person name="Li G."/>
            <person name="Shi J."/>
            <person name="Liu J."/>
            <person name="Lv H."/>
            <person name="Li J."/>
            <person name="Wang J."/>
            <person name="Deng Y."/>
            <person name="Ran L."/>
            <person name="Shi X."/>
            <person name="Wang X."/>
            <person name="Wu Q."/>
            <person name="Li C."/>
            <person name="Ren X."/>
            <person name="Wang J."/>
            <person name="Wang X."/>
            <person name="Li D."/>
            <person name="Liu D."/>
            <person name="Zhang X."/>
            <person name="Ji Z."/>
            <person name="Zhao W."/>
            <person name="Sun Y."/>
            <person name="Zhang Z."/>
            <person name="Bao J."/>
            <person name="Han Y."/>
            <person name="Dong L."/>
            <person name="Ji J."/>
            <person name="Chen P."/>
            <person name="Wu S."/>
            <person name="Liu J."/>
            <person name="Xiao Y."/>
            <person name="Bu D."/>
            <person name="Tan J."/>
            <person name="Yang L."/>
            <person name="Ye C."/>
            <person name="Zhang J."/>
            <person name="Xu J."/>
            <person name="Zhou Y."/>
            <person name="Yu Y."/>
            <person name="Zhang B."/>
            <person name="Zhuang S."/>
            <person name="Wei H."/>
            <person name="Liu B."/>
            <person name="Lei M."/>
            <person name="Yu H."/>
            <person name="Li Y."/>
            <person name="Xu H."/>
            <person name="Wei S."/>
            <person name="He X."/>
            <person name="Fang L."/>
            <person name="Zhang Z."/>
            <person name="Zhang Y."/>
            <person name="Huang X."/>
            <person name="Su Z."/>
            <person name="Tong W."/>
            <person name="Li J."/>
            <person name="Tong Z."/>
            <person name="Li S."/>
            <person name="Ye J."/>
            <person name="Wang L."/>
            <person name="Fang L."/>
            <person name="Lei T."/>
            <person name="Chen C.-S."/>
            <person name="Chen H.-C."/>
            <person name="Xu Z."/>
            <person name="Li H."/>
            <person name="Huang H."/>
            <person name="Zhang F."/>
            <person name="Xu H."/>
            <person name="Li N."/>
            <person name="Zhao C."/>
            <person name="Li S."/>
            <person name="Dong L."/>
            <person name="Huang Y."/>
            <person name="Li L."/>
            <person name="Xi Y."/>
            <person name="Qi Q."/>
            <person name="Li W."/>
            <person name="Zhang B."/>
            <person name="Hu W."/>
            <person name="Zhang Y."/>
            <person name="Tian X."/>
            <person name="Jiao Y."/>
            <person name="Liang X."/>
            <person name="Jin J."/>
            <person name="Gao L."/>
            <person name="Zheng W."/>
            <person name="Hao B."/>
            <person name="Liu S.-M."/>
            <person name="Wang W."/>
            <person name="Yuan L."/>
            <person name="Cao M."/>
            <person name="McDermott J."/>
            <person name="Samudrala R."/>
            <person name="Wang J."/>
            <person name="Wong G.K.-S."/>
            <person name="Yang H."/>
        </authorList>
    </citation>
    <scope>NUCLEOTIDE SEQUENCE [LARGE SCALE GENOMIC DNA]</scope>
    <source>
        <strain>cv. 93-11</strain>
    </source>
</reference>
<evidence type="ECO:0000250" key="1">
    <source>
        <dbReference type="UniProtKB" id="Q10MQ0"/>
    </source>
</evidence>
<evidence type="ECO:0000255" key="2"/>
<evidence type="ECO:0000255" key="3">
    <source>
        <dbReference type="PROSITE-ProRule" id="PRU00498"/>
    </source>
</evidence>
<evidence type="ECO:0000256" key="4">
    <source>
        <dbReference type="SAM" id="MobiDB-lite"/>
    </source>
</evidence>
<evidence type="ECO:0000305" key="5"/>
<evidence type="ECO:0000312" key="6">
    <source>
        <dbReference type="EMBL" id="EAY87343.1"/>
    </source>
</evidence>
<dbReference type="EC" id="2.4.-.-" evidence="5"/>
<dbReference type="EMBL" id="CM000127">
    <property type="protein sequence ID" value="EAY87343.1"/>
    <property type="status" value="ALT_INIT"/>
    <property type="molecule type" value="Genomic_DNA"/>
</dbReference>
<dbReference type="SMR" id="A2X933"/>
<dbReference type="STRING" id="39946.A2X933"/>
<dbReference type="GlyCosmos" id="A2X933">
    <property type="glycosylation" value="2 sites, No reported glycans"/>
</dbReference>
<dbReference type="EnsemblPlants" id="OsIR64_02g0031250.01">
    <property type="protein sequence ID" value="OsIR64_02g0031250.01"/>
    <property type="gene ID" value="OsIR64_02g0031250"/>
</dbReference>
<dbReference type="EnsemblPlants" id="OsKYG_02g0031330.01">
    <property type="protein sequence ID" value="OsKYG_02g0031330.01"/>
    <property type="gene ID" value="OsKYG_02g0031330"/>
</dbReference>
<dbReference type="EnsemblPlants" id="OsLima_02g0031550.01">
    <property type="protein sequence ID" value="OsLima_02g0031550.01"/>
    <property type="gene ID" value="OsLima_02g0031550"/>
</dbReference>
<dbReference type="EnsemblPlants" id="OsLiXu_02g0031550.01">
    <property type="protein sequence ID" value="OsLiXu_02g0031550.01"/>
    <property type="gene ID" value="OsLiXu_02g0031550"/>
</dbReference>
<dbReference type="EnsemblPlants" id="OsMH63_02G031950_01">
    <property type="protein sequence ID" value="OsMH63_02G031950_01"/>
    <property type="gene ID" value="OsMH63_02G031950"/>
</dbReference>
<dbReference type="EnsemblPlants" id="OsPr106_02g0031480.01">
    <property type="protein sequence ID" value="OsPr106_02g0031480.01"/>
    <property type="gene ID" value="OsPr106_02g0031480"/>
</dbReference>
<dbReference type="EnsemblPlants" id="OsZS97_02G031220_01">
    <property type="protein sequence ID" value="OsZS97_02G031220_01"/>
    <property type="gene ID" value="OsZS97_02G031220"/>
</dbReference>
<dbReference type="Gramene" id="OsIR64_02g0031250.01">
    <property type="protein sequence ID" value="OsIR64_02g0031250.01"/>
    <property type="gene ID" value="OsIR64_02g0031250"/>
</dbReference>
<dbReference type="Gramene" id="OsKYG_02g0031330.01">
    <property type="protein sequence ID" value="OsKYG_02g0031330.01"/>
    <property type="gene ID" value="OsKYG_02g0031330"/>
</dbReference>
<dbReference type="Gramene" id="OsLima_02g0031550.01">
    <property type="protein sequence ID" value="OsLima_02g0031550.01"/>
    <property type="gene ID" value="OsLima_02g0031550"/>
</dbReference>
<dbReference type="Gramene" id="OsLiXu_02g0031550.01">
    <property type="protein sequence ID" value="OsLiXu_02g0031550.01"/>
    <property type="gene ID" value="OsLiXu_02g0031550"/>
</dbReference>
<dbReference type="Gramene" id="OsMH63_02G031950_01">
    <property type="protein sequence ID" value="OsMH63_02G031950_01"/>
    <property type="gene ID" value="OsMH63_02G031950"/>
</dbReference>
<dbReference type="Gramene" id="OsPr106_02g0031480.01">
    <property type="protein sequence ID" value="OsPr106_02g0031480.01"/>
    <property type="gene ID" value="OsPr106_02g0031480"/>
</dbReference>
<dbReference type="Gramene" id="OsZS97_02G031220_01">
    <property type="protein sequence ID" value="OsZS97_02G031220_01"/>
    <property type="gene ID" value="OsZS97_02G031220"/>
</dbReference>
<dbReference type="HOGENOM" id="CLU_034328_0_0_1"/>
<dbReference type="Proteomes" id="UP000007015">
    <property type="component" value="Chromosome 2"/>
</dbReference>
<dbReference type="GO" id="GO:0005768">
    <property type="term" value="C:endosome"/>
    <property type="evidence" value="ECO:0007669"/>
    <property type="project" value="TreeGrafter"/>
</dbReference>
<dbReference type="GO" id="GO:0000139">
    <property type="term" value="C:Golgi membrane"/>
    <property type="evidence" value="ECO:0007669"/>
    <property type="project" value="UniProtKB-SubCell"/>
</dbReference>
<dbReference type="GO" id="GO:0005802">
    <property type="term" value="C:trans-Golgi network"/>
    <property type="evidence" value="ECO:0007669"/>
    <property type="project" value="TreeGrafter"/>
</dbReference>
<dbReference type="GO" id="GO:0008378">
    <property type="term" value="F:galactosyltransferase activity"/>
    <property type="evidence" value="ECO:0007669"/>
    <property type="project" value="TreeGrafter"/>
</dbReference>
<dbReference type="FunFam" id="3.90.550.10:FF:000127">
    <property type="entry name" value="Probable glycosyltransferase 7"/>
    <property type="match status" value="1"/>
</dbReference>
<dbReference type="Gene3D" id="3.90.550.10">
    <property type="entry name" value="Spore Coat Polysaccharide Biosynthesis Protein SpsA, Chain A"/>
    <property type="match status" value="1"/>
</dbReference>
<dbReference type="InterPro" id="IPR008630">
    <property type="entry name" value="Glyco_trans_34"/>
</dbReference>
<dbReference type="InterPro" id="IPR029044">
    <property type="entry name" value="Nucleotide-diphossugar_trans"/>
</dbReference>
<dbReference type="PANTHER" id="PTHR31311:SF3">
    <property type="entry name" value="GLYCOSYLTRANSFERASE 7-RELATED"/>
    <property type="match status" value="1"/>
</dbReference>
<dbReference type="PANTHER" id="PTHR31311">
    <property type="entry name" value="XYLOGLUCAN 6-XYLOSYLTRANSFERASE 5-RELATED-RELATED"/>
    <property type="match status" value="1"/>
</dbReference>
<dbReference type="Pfam" id="PF05637">
    <property type="entry name" value="Glyco_transf_34"/>
    <property type="match status" value="1"/>
</dbReference>
<protein>
    <recommendedName>
        <fullName evidence="5">Probable glycosyltransferase 7</fullName>
        <ecNumber evidence="5">2.4.-.-</ecNumber>
    </recommendedName>
</protein>
<proteinExistence type="inferred from homology"/>
<sequence length="447" mass="49665">MRATTGARHLHPPWRRGLRHHRQSTMPPRASRGRLADAALFTAGAVLGSVLLLTLASPFSSSSSPSSGVGSGEVDRLGGGRTFYDDPGVAYTIDRPIVGWDEKRAEWLRAHPELAGGGGERVLMVSGSQPEPCGSPAGDSLLTRLLKNKLDYCRLNGVQLLYNTALLRPSMDRYWAKIPVVRAAMVAHPEAEWVWWVDSDAVLTDMDFRLPLSRYRDHNFVAHGWPHLVYESRSWTSLNAGVFLIRNCQWSLDFMDAWAAMGPDSPEYQHWGAVLTSTFKDKVFNESDDQSALVYMLLQSGSPWRDKVYLESDYYFEGYWLEIAGRLGNITERYEAMERGAAPLRRRHAEAEHASYAAARDAALAGAGLAESGVSGWRRPFVTHFTGCQPCSGHRNEHYTGKSCDEGIRRALSFADDQVLRAYGFRHAGPLSDAVSPLPFDHPTQTA</sequence>
<accession>A2X933</accession>
<feature type="chain" id="PRO_0000434336" description="Probable glycosyltransferase 7">
    <location>
        <begin position="1"/>
        <end position="447"/>
    </location>
</feature>
<feature type="topological domain" description="Cytoplasmic" evidence="5">
    <location>
        <begin position="1"/>
        <end position="37"/>
    </location>
</feature>
<feature type="transmembrane region" description="Helical; Signal-anchor for type II membrane protein" evidence="2">
    <location>
        <begin position="38"/>
        <end position="60"/>
    </location>
</feature>
<feature type="topological domain" description="Lumenal" evidence="5">
    <location>
        <begin position="61"/>
        <end position="447"/>
    </location>
</feature>
<feature type="region of interest" description="Disordered" evidence="4">
    <location>
        <begin position="1"/>
        <end position="31"/>
    </location>
</feature>
<feature type="compositionally biased region" description="Basic residues" evidence="4">
    <location>
        <begin position="8"/>
        <end position="23"/>
    </location>
</feature>
<feature type="glycosylation site" description="N-linked (GlcNAc...) asparagine" evidence="3">
    <location>
        <position position="285"/>
    </location>
</feature>
<feature type="glycosylation site" description="N-linked (GlcNAc...) asparagine" evidence="3">
    <location>
        <position position="329"/>
    </location>
</feature>